<accession>Q980W3</accession>
<gene>
    <name evidence="1" type="primary">rps8e</name>
    <name type="ordered locus">SSO0164</name>
</gene>
<proteinExistence type="evidence at protein level"/>
<comment type="subunit">
    <text evidence="1">Part of the 30S ribosomal subunit.</text>
</comment>
<comment type="similarity">
    <text evidence="1">Belongs to the eukaryotic ribosomal protein eS8 family.</text>
</comment>
<name>RS8E_SACS2</name>
<sequence length="133" mass="14659">MGFYQGPDNRKITGGLKGKHRDKRKYEIGNPPTFTTLSAEDIRIKDRTLGGNFKVRLKYTTTANVLDPATNTAKKVKILEILETPANKELARRGIIIRGAKIRTEAGLAVVTSRPGQDGVINAVLLKNESQRS</sequence>
<organism>
    <name type="scientific">Saccharolobus solfataricus (strain ATCC 35092 / DSM 1617 / JCM 11322 / P2)</name>
    <name type="common">Sulfolobus solfataricus</name>
    <dbReference type="NCBI Taxonomy" id="273057"/>
    <lineage>
        <taxon>Archaea</taxon>
        <taxon>Thermoproteota</taxon>
        <taxon>Thermoprotei</taxon>
        <taxon>Sulfolobales</taxon>
        <taxon>Sulfolobaceae</taxon>
        <taxon>Saccharolobus</taxon>
    </lineage>
</organism>
<reference key="1">
    <citation type="journal article" date="2001" name="Proc. Natl. Acad. Sci. U.S.A.">
        <title>The complete genome of the crenarchaeon Sulfolobus solfataricus P2.</title>
        <authorList>
            <person name="She Q."/>
            <person name="Singh R.K."/>
            <person name="Confalonieri F."/>
            <person name="Zivanovic Y."/>
            <person name="Allard G."/>
            <person name="Awayez M.J."/>
            <person name="Chan-Weiher C.C.-Y."/>
            <person name="Clausen I.G."/>
            <person name="Curtis B.A."/>
            <person name="De Moors A."/>
            <person name="Erauso G."/>
            <person name="Fletcher C."/>
            <person name="Gordon P.M.K."/>
            <person name="Heikamp-de Jong I."/>
            <person name="Jeffries A.C."/>
            <person name="Kozera C.J."/>
            <person name="Medina N."/>
            <person name="Peng X."/>
            <person name="Thi-Ngoc H.P."/>
            <person name="Redder P."/>
            <person name="Schenk M.E."/>
            <person name="Theriault C."/>
            <person name="Tolstrup N."/>
            <person name="Charlebois R.L."/>
            <person name="Doolittle W.F."/>
            <person name="Duguet M."/>
            <person name="Gaasterland T."/>
            <person name="Garrett R.A."/>
            <person name="Ragan M.A."/>
            <person name="Sensen C.W."/>
            <person name="Van der Oost J."/>
        </authorList>
    </citation>
    <scope>NUCLEOTIDE SEQUENCE [LARGE SCALE GENOMIC DNA]</scope>
    <source>
        <strain>ATCC 35092 / DSM 1617 / JCM 11322 / P2</strain>
    </source>
</reference>
<feature type="chain" id="PRO_0000122280" description="Small ribosomal subunit protein eS8">
    <location>
        <begin position="1"/>
        <end position="133"/>
    </location>
</feature>
<feature type="region of interest" description="Disordered" evidence="2">
    <location>
        <begin position="1"/>
        <end position="31"/>
    </location>
</feature>
<feature type="helix" evidence="4">
    <location>
        <begin position="39"/>
        <end position="47"/>
    </location>
</feature>
<feature type="strand" evidence="4">
    <location>
        <begin position="62"/>
        <end position="67"/>
    </location>
</feature>
<feature type="turn" evidence="4">
    <location>
        <begin position="68"/>
        <end position="71"/>
    </location>
</feature>
<feature type="strand" evidence="4">
    <location>
        <begin position="72"/>
        <end position="81"/>
    </location>
</feature>
<feature type="helix" evidence="4">
    <location>
        <begin position="88"/>
        <end position="91"/>
    </location>
</feature>
<feature type="turn" evidence="4">
    <location>
        <begin position="92"/>
        <end position="94"/>
    </location>
</feature>
<feature type="strand" evidence="4">
    <location>
        <begin position="101"/>
        <end position="115"/>
    </location>
</feature>
<feature type="strand" evidence="4">
    <location>
        <begin position="119"/>
        <end position="125"/>
    </location>
</feature>
<protein>
    <recommendedName>
        <fullName evidence="1">Small ribosomal subunit protein eS8</fullName>
    </recommendedName>
    <alternativeName>
        <fullName evidence="3">30S ribosomal protein S8e</fullName>
    </alternativeName>
</protein>
<keyword id="KW-0002">3D-structure</keyword>
<keyword id="KW-1185">Reference proteome</keyword>
<keyword id="KW-0687">Ribonucleoprotein</keyword>
<keyword id="KW-0689">Ribosomal protein</keyword>
<dbReference type="EMBL" id="AE006641">
    <property type="protein sequence ID" value="AAK40509.1"/>
    <property type="molecule type" value="Genomic_DNA"/>
</dbReference>
<dbReference type="PIR" id="F90156">
    <property type="entry name" value="F90156"/>
</dbReference>
<dbReference type="RefSeq" id="WP_009990388.1">
    <property type="nucleotide sequence ID" value="NC_002754.1"/>
</dbReference>
<dbReference type="PDB" id="2KCO">
    <property type="method" value="NMR"/>
    <property type="chains" value="A=1-133"/>
</dbReference>
<dbReference type="PDB" id="9FHL">
    <property type="method" value="EM"/>
    <property type="resolution" value="2.50 A"/>
    <property type="chains" value="J=1-133"/>
</dbReference>
<dbReference type="PDB" id="9FRA">
    <property type="method" value="EM"/>
    <property type="resolution" value="2.80 A"/>
    <property type="chains" value="J=1-133"/>
</dbReference>
<dbReference type="PDB" id="9FRK">
    <property type="method" value="EM"/>
    <property type="resolution" value="3.00 A"/>
    <property type="chains" value="J=1-133"/>
</dbReference>
<dbReference type="PDB" id="9FRL">
    <property type="method" value="EM"/>
    <property type="resolution" value="2.97 A"/>
    <property type="chains" value="J=1-133"/>
</dbReference>
<dbReference type="PDB" id="9FS6">
    <property type="method" value="EM"/>
    <property type="resolution" value="2.90 A"/>
    <property type="chains" value="J=1-133"/>
</dbReference>
<dbReference type="PDB" id="9FS8">
    <property type="method" value="EM"/>
    <property type="resolution" value="3.70 A"/>
    <property type="chains" value="J=1-133"/>
</dbReference>
<dbReference type="PDB" id="9FSF">
    <property type="method" value="EM"/>
    <property type="resolution" value="2.80 A"/>
    <property type="chains" value="J=1-133"/>
</dbReference>
<dbReference type="PDB" id="9FY0">
    <property type="method" value="EM"/>
    <property type="resolution" value="2.90 A"/>
    <property type="chains" value="J=1-133"/>
</dbReference>
<dbReference type="PDBsum" id="2KCO"/>
<dbReference type="PDBsum" id="9FHL"/>
<dbReference type="PDBsum" id="9FRA"/>
<dbReference type="PDBsum" id="9FRK"/>
<dbReference type="PDBsum" id="9FRL"/>
<dbReference type="PDBsum" id="9FS6"/>
<dbReference type="PDBsum" id="9FS8"/>
<dbReference type="PDBsum" id="9FSF"/>
<dbReference type="PDBsum" id="9FY0"/>
<dbReference type="EMDB" id="EMD-50445"/>
<dbReference type="EMDB" id="EMD-50709"/>
<dbReference type="EMDB" id="EMD-50716"/>
<dbReference type="EMDB" id="EMD-50717"/>
<dbReference type="EMDB" id="EMD-50724"/>
<dbReference type="EMDB" id="EMD-50725"/>
<dbReference type="EMDB" id="EMD-50727"/>
<dbReference type="EMDB" id="EMD-50854"/>
<dbReference type="SMR" id="Q980W3"/>
<dbReference type="FunCoup" id="Q980W3">
    <property type="interactions" value="64"/>
</dbReference>
<dbReference type="STRING" id="273057.SSO0164"/>
<dbReference type="PaxDb" id="273057-SSO0164"/>
<dbReference type="DNASU" id="1453336"/>
<dbReference type="EnsemblBacteria" id="AAK40509">
    <property type="protein sequence ID" value="AAK40509"/>
    <property type="gene ID" value="SSO0164"/>
</dbReference>
<dbReference type="KEGG" id="sso:SSO0164"/>
<dbReference type="PATRIC" id="fig|273057.12.peg.160"/>
<dbReference type="eggNOG" id="arCOG04154">
    <property type="taxonomic scope" value="Archaea"/>
</dbReference>
<dbReference type="HOGENOM" id="CLU_080597_2_1_2"/>
<dbReference type="InParanoid" id="Q980W3"/>
<dbReference type="PhylomeDB" id="Q980W3"/>
<dbReference type="EvolutionaryTrace" id="Q980W3"/>
<dbReference type="Proteomes" id="UP000001974">
    <property type="component" value="Chromosome"/>
</dbReference>
<dbReference type="GO" id="GO:0022627">
    <property type="term" value="C:cytosolic small ribosomal subunit"/>
    <property type="evidence" value="ECO:0000318"/>
    <property type="project" value="GO_Central"/>
</dbReference>
<dbReference type="GO" id="GO:0003735">
    <property type="term" value="F:structural constituent of ribosome"/>
    <property type="evidence" value="ECO:0000318"/>
    <property type="project" value="GO_Central"/>
</dbReference>
<dbReference type="GO" id="GO:0000462">
    <property type="term" value="P:maturation of SSU-rRNA from tricistronic rRNA transcript (SSU-rRNA, 5.8S rRNA, LSU-rRNA)"/>
    <property type="evidence" value="ECO:0000318"/>
    <property type="project" value="GO_Central"/>
</dbReference>
<dbReference type="GO" id="GO:0006412">
    <property type="term" value="P:translation"/>
    <property type="evidence" value="ECO:0007669"/>
    <property type="project" value="UniProtKB-UniRule"/>
</dbReference>
<dbReference type="CDD" id="cd11382">
    <property type="entry name" value="Ribosomal_S8e"/>
    <property type="match status" value="1"/>
</dbReference>
<dbReference type="FunFam" id="2.40.10.310:FF:000002">
    <property type="entry name" value="30S ribosomal protein S8e"/>
    <property type="match status" value="1"/>
</dbReference>
<dbReference type="Gene3D" id="2.40.10.310">
    <property type="match status" value="1"/>
</dbReference>
<dbReference type="HAMAP" id="MF_00029">
    <property type="entry name" value="Ribosomal_eS8"/>
    <property type="match status" value="1"/>
</dbReference>
<dbReference type="InterPro" id="IPR001047">
    <property type="entry name" value="Ribosomal_eS8"/>
</dbReference>
<dbReference type="InterPro" id="IPR018283">
    <property type="entry name" value="Ribosomal_eS8_CS"/>
</dbReference>
<dbReference type="InterPro" id="IPR020919">
    <property type="entry name" value="Ribosomal_protein_eS8_arc"/>
</dbReference>
<dbReference type="InterPro" id="IPR022309">
    <property type="entry name" value="Ribosomal_Se8/biogenesis_NSA2"/>
</dbReference>
<dbReference type="NCBIfam" id="TIGR00307">
    <property type="entry name" value="eS8"/>
    <property type="match status" value="1"/>
</dbReference>
<dbReference type="PANTHER" id="PTHR10394">
    <property type="entry name" value="40S RIBOSOMAL PROTEIN S8"/>
    <property type="match status" value="1"/>
</dbReference>
<dbReference type="Pfam" id="PF01201">
    <property type="entry name" value="Ribosomal_S8e"/>
    <property type="match status" value="1"/>
</dbReference>
<dbReference type="PROSITE" id="PS01193">
    <property type="entry name" value="RIBOSOMAL_S8E"/>
    <property type="match status" value="1"/>
</dbReference>
<evidence type="ECO:0000255" key="1">
    <source>
        <dbReference type="HAMAP-Rule" id="MF_00029"/>
    </source>
</evidence>
<evidence type="ECO:0000256" key="2">
    <source>
        <dbReference type="SAM" id="MobiDB-lite"/>
    </source>
</evidence>
<evidence type="ECO:0000305" key="3"/>
<evidence type="ECO:0007829" key="4">
    <source>
        <dbReference type="PDB" id="2KCO"/>
    </source>
</evidence>